<evidence type="ECO:0000250" key="1"/>
<evidence type="ECO:0000255" key="2"/>
<evidence type="ECO:0000255" key="3">
    <source>
        <dbReference type="PROSITE-ProRule" id="PRU01240"/>
    </source>
</evidence>
<evidence type="ECO:0000305" key="4"/>
<feature type="signal peptide" evidence="2">
    <location>
        <begin position="1"/>
        <end position="20"/>
    </location>
</feature>
<feature type="propeptide" id="PRO_0000407028" evidence="1">
    <location>
        <begin position="21"/>
        <end position="117"/>
    </location>
</feature>
<feature type="chain" id="PRO_0000407029" description="Subtilisin-like protease CPC735_033790">
    <location>
        <begin position="118"/>
        <end position="399"/>
    </location>
</feature>
<feature type="domain" description="Inhibitor I9" evidence="2">
    <location>
        <begin position="37"/>
        <end position="116"/>
    </location>
</feature>
<feature type="domain" description="Peptidase S8" evidence="3">
    <location>
        <begin position="127"/>
        <end position="399"/>
    </location>
</feature>
<feature type="active site" description="Charge relay system" evidence="3">
    <location>
        <position position="159"/>
    </location>
</feature>
<feature type="active site" description="Charge relay system" evidence="3">
    <location>
        <position position="190"/>
    </location>
</feature>
<feature type="active site" description="Charge relay system" evidence="3">
    <location>
        <position position="345"/>
    </location>
</feature>
<feature type="glycosylation site" description="N-linked (GlcNAc...) asparagine" evidence="2">
    <location>
        <position position="115"/>
    </location>
</feature>
<feature type="glycosylation site" description="N-linked (GlcNAc...) asparagine" evidence="2">
    <location>
        <position position="251"/>
    </location>
</feature>
<feature type="glycosylation site" description="N-linked (GlcNAc...) asparagine" evidence="2">
    <location>
        <position position="395"/>
    </location>
</feature>
<proteinExistence type="inferred from homology"/>
<gene>
    <name type="ORF">CPC735_033790</name>
</gene>
<reference key="1">
    <citation type="journal article" date="2009" name="Genome Res.">
        <title>Comparative genomic analyses of the human fungal pathogens Coccidioides and their relatives.</title>
        <authorList>
            <person name="Sharpton T.J."/>
            <person name="Stajich J.E."/>
            <person name="Rounsley S.D."/>
            <person name="Gardner M.J."/>
            <person name="Wortman J.R."/>
            <person name="Jordar V.S."/>
            <person name="Maiti R."/>
            <person name="Kodira C.D."/>
            <person name="Neafsey D.E."/>
            <person name="Zeng Q."/>
            <person name="Hung C.-Y."/>
            <person name="McMahan C."/>
            <person name="Muszewska A."/>
            <person name="Grynberg M."/>
            <person name="Mandel M.A."/>
            <person name="Kellner E.M."/>
            <person name="Barker B.M."/>
            <person name="Galgiani J.N."/>
            <person name="Orbach M.J."/>
            <person name="Kirkland T.N."/>
            <person name="Cole G.T."/>
            <person name="Henn M.R."/>
            <person name="Birren B.W."/>
            <person name="Taylor J.W."/>
        </authorList>
    </citation>
    <scope>NUCLEOTIDE SEQUENCE [LARGE SCALE GENOMIC DNA]</scope>
    <source>
        <strain>C735</strain>
    </source>
</reference>
<accession>C5P5Q3</accession>
<comment type="function">
    <text evidence="1">Secreted subtilisin-like serine protease with keratinolytic activity that contributes to pathogenicity.</text>
</comment>
<comment type="subcellular location">
    <subcellularLocation>
        <location evidence="1">Secreted</location>
    </subcellularLocation>
</comment>
<comment type="similarity">
    <text evidence="4">Belongs to the peptidase S8 family.</text>
</comment>
<organism>
    <name type="scientific">Coccidioides posadasii (strain C735)</name>
    <name type="common">Valley fever fungus</name>
    <dbReference type="NCBI Taxonomy" id="222929"/>
    <lineage>
        <taxon>Eukaryota</taxon>
        <taxon>Fungi</taxon>
        <taxon>Dikarya</taxon>
        <taxon>Ascomycota</taxon>
        <taxon>Pezizomycotina</taxon>
        <taxon>Eurotiomycetes</taxon>
        <taxon>Eurotiomycetidae</taxon>
        <taxon>Onygenales</taxon>
        <taxon>Onygenaceae</taxon>
        <taxon>Coccidioides</taxon>
    </lineage>
</organism>
<name>SUB9_COCP7</name>
<protein>
    <recommendedName>
        <fullName>Subtilisin-like protease CPC735_033790</fullName>
        <ecNumber>3.4.21.-</ecNumber>
    </recommendedName>
</protein>
<dbReference type="EC" id="3.4.21.-"/>
<dbReference type="EMBL" id="ACFW01000025">
    <property type="protein sequence ID" value="EER28043.1"/>
    <property type="molecule type" value="Genomic_DNA"/>
</dbReference>
<dbReference type="SMR" id="C5P5Q3"/>
<dbReference type="MEROPS" id="S08.115"/>
<dbReference type="KEGG" id="cpw:9695683"/>
<dbReference type="VEuPathDB" id="FungiDB:CPC735_033790"/>
<dbReference type="HOGENOM" id="CLU_011263_1_3_1"/>
<dbReference type="OrthoDB" id="206201at2759"/>
<dbReference type="Proteomes" id="UP000009084">
    <property type="component" value="Unassembled WGS sequence"/>
</dbReference>
<dbReference type="GO" id="GO:0005576">
    <property type="term" value="C:extracellular region"/>
    <property type="evidence" value="ECO:0007669"/>
    <property type="project" value="UniProtKB-SubCell"/>
</dbReference>
<dbReference type="GO" id="GO:0004252">
    <property type="term" value="F:serine-type endopeptidase activity"/>
    <property type="evidence" value="ECO:0007669"/>
    <property type="project" value="InterPro"/>
</dbReference>
<dbReference type="GO" id="GO:0006508">
    <property type="term" value="P:proteolysis"/>
    <property type="evidence" value="ECO:0007669"/>
    <property type="project" value="UniProtKB-KW"/>
</dbReference>
<dbReference type="CDD" id="cd04077">
    <property type="entry name" value="Peptidases_S8_PCSK9_ProteinaseK_like"/>
    <property type="match status" value="1"/>
</dbReference>
<dbReference type="FunFam" id="3.40.50.200:FF:000014">
    <property type="entry name" value="Proteinase K"/>
    <property type="match status" value="1"/>
</dbReference>
<dbReference type="Gene3D" id="3.30.70.80">
    <property type="entry name" value="Peptidase S8 propeptide/proteinase inhibitor I9"/>
    <property type="match status" value="1"/>
</dbReference>
<dbReference type="Gene3D" id="3.40.50.200">
    <property type="entry name" value="Peptidase S8/S53 domain"/>
    <property type="match status" value="1"/>
</dbReference>
<dbReference type="InterPro" id="IPR034193">
    <property type="entry name" value="PCSK9_ProteinaseK-like"/>
</dbReference>
<dbReference type="InterPro" id="IPR000209">
    <property type="entry name" value="Peptidase_S8/S53_dom"/>
</dbReference>
<dbReference type="InterPro" id="IPR036852">
    <property type="entry name" value="Peptidase_S8/S53_dom_sf"/>
</dbReference>
<dbReference type="InterPro" id="IPR023828">
    <property type="entry name" value="Peptidase_S8_Ser-AS"/>
</dbReference>
<dbReference type="InterPro" id="IPR050131">
    <property type="entry name" value="Peptidase_S8_subtilisin-like"/>
</dbReference>
<dbReference type="InterPro" id="IPR015500">
    <property type="entry name" value="Peptidase_S8_subtilisin-rel"/>
</dbReference>
<dbReference type="InterPro" id="IPR010259">
    <property type="entry name" value="S8pro/Inhibitor_I9"/>
</dbReference>
<dbReference type="InterPro" id="IPR037045">
    <property type="entry name" value="S8pro/Inhibitor_I9_sf"/>
</dbReference>
<dbReference type="PANTHER" id="PTHR43806:SF11">
    <property type="entry name" value="CEREVISIN-RELATED"/>
    <property type="match status" value="1"/>
</dbReference>
<dbReference type="PANTHER" id="PTHR43806">
    <property type="entry name" value="PEPTIDASE S8"/>
    <property type="match status" value="1"/>
</dbReference>
<dbReference type="Pfam" id="PF05922">
    <property type="entry name" value="Inhibitor_I9"/>
    <property type="match status" value="1"/>
</dbReference>
<dbReference type="Pfam" id="PF00082">
    <property type="entry name" value="Peptidase_S8"/>
    <property type="match status" value="1"/>
</dbReference>
<dbReference type="PRINTS" id="PR00723">
    <property type="entry name" value="SUBTILISIN"/>
</dbReference>
<dbReference type="SUPFAM" id="SSF54897">
    <property type="entry name" value="Protease propeptides/inhibitors"/>
    <property type="match status" value="1"/>
</dbReference>
<dbReference type="SUPFAM" id="SSF52743">
    <property type="entry name" value="Subtilisin-like"/>
    <property type="match status" value="1"/>
</dbReference>
<dbReference type="PROSITE" id="PS51892">
    <property type="entry name" value="SUBTILASE"/>
    <property type="match status" value="1"/>
</dbReference>
<dbReference type="PROSITE" id="PS00138">
    <property type="entry name" value="SUBTILASE_SER"/>
    <property type="match status" value="1"/>
</dbReference>
<sequence>MGFLSSAILLLITAFPAAQAGEMINAAAGATDVIPDSYIVVMNEGISESDFESHRTWATSMNSKSRKRAGAFSGVSRTWSATGMKGYSGSFARETIEQIANNSAVAYVEPDRMVNITAFVTQRNAPSYGLGRISNKRPGNRDYIFDESAGRGITIYGVDTGIDIRHPEFEGRATWGTNEINDVNQDENGHGTHTAGTFAGRNFGVAKRANIVAVKVLNAEGSGSTSGIISGINWCVDHARRNNILGRAVMNLSLGGTGARAFNQVATNAANAGIFLAVAAGNDGEDAANTSPASARGVCTVSASTERDTRADFSNFGSVVDIYAPGDQIPSVFPNNARRVLSGTSMAAPHVAGVGAYLMALEGISSGQVCNRIKRLSQPRIRNPGRDTTNRLLYNNSGV</sequence>
<keyword id="KW-0325">Glycoprotein</keyword>
<keyword id="KW-0378">Hydrolase</keyword>
<keyword id="KW-0645">Protease</keyword>
<keyword id="KW-0964">Secreted</keyword>
<keyword id="KW-0720">Serine protease</keyword>
<keyword id="KW-0732">Signal</keyword>
<keyword id="KW-0843">Virulence</keyword>
<keyword id="KW-0865">Zymogen</keyword>